<comment type="function">
    <text evidence="1">Nucleotidase that shows phosphatase activity on nucleoside 5'-monophosphates.</text>
</comment>
<comment type="catalytic activity">
    <reaction evidence="1">
        <text>a ribonucleoside 5'-phosphate + H2O = a ribonucleoside + phosphate</text>
        <dbReference type="Rhea" id="RHEA:12484"/>
        <dbReference type="ChEBI" id="CHEBI:15377"/>
        <dbReference type="ChEBI" id="CHEBI:18254"/>
        <dbReference type="ChEBI" id="CHEBI:43474"/>
        <dbReference type="ChEBI" id="CHEBI:58043"/>
        <dbReference type="EC" id="3.1.3.5"/>
    </reaction>
</comment>
<comment type="cofactor">
    <cofactor evidence="1">
        <name>a divalent metal cation</name>
        <dbReference type="ChEBI" id="CHEBI:60240"/>
    </cofactor>
    <text evidence="1">Binds 1 divalent metal cation per subunit.</text>
</comment>
<comment type="subcellular location">
    <subcellularLocation>
        <location evidence="1">Cytoplasm</location>
    </subcellularLocation>
</comment>
<comment type="similarity">
    <text evidence="1">Belongs to the SurE nucleotidase family.</text>
</comment>
<gene>
    <name evidence="1" type="primary">surE</name>
    <name type="ordered locus">Mbur_2188</name>
</gene>
<organism>
    <name type="scientific">Methanococcoides burtonii (strain DSM 6242 / NBRC 107633 / OCM 468 / ACE-M)</name>
    <dbReference type="NCBI Taxonomy" id="259564"/>
    <lineage>
        <taxon>Archaea</taxon>
        <taxon>Methanobacteriati</taxon>
        <taxon>Methanobacteriota</taxon>
        <taxon>Stenosarchaea group</taxon>
        <taxon>Methanomicrobia</taxon>
        <taxon>Methanosarcinales</taxon>
        <taxon>Methanosarcinaceae</taxon>
        <taxon>Methanococcoides</taxon>
    </lineage>
</organism>
<dbReference type="EC" id="3.1.3.5" evidence="1"/>
<dbReference type="EMBL" id="CP000300">
    <property type="protein sequence ID" value="ABE53053.1"/>
    <property type="molecule type" value="Genomic_DNA"/>
</dbReference>
<dbReference type="RefSeq" id="WP_011500189.1">
    <property type="nucleotide sequence ID" value="NC_007955.1"/>
</dbReference>
<dbReference type="SMR" id="Q12U23"/>
<dbReference type="STRING" id="259564.Mbur_2188"/>
<dbReference type="GeneID" id="3997044"/>
<dbReference type="KEGG" id="mbu:Mbur_2188"/>
<dbReference type="HOGENOM" id="CLU_045192_1_3_2"/>
<dbReference type="OrthoDB" id="26873at2157"/>
<dbReference type="Proteomes" id="UP000001979">
    <property type="component" value="Chromosome"/>
</dbReference>
<dbReference type="GO" id="GO:0005737">
    <property type="term" value="C:cytoplasm"/>
    <property type="evidence" value="ECO:0007669"/>
    <property type="project" value="UniProtKB-SubCell"/>
</dbReference>
<dbReference type="GO" id="GO:0008253">
    <property type="term" value="F:5'-nucleotidase activity"/>
    <property type="evidence" value="ECO:0007669"/>
    <property type="project" value="UniProtKB-UniRule"/>
</dbReference>
<dbReference type="GO" id="GO:0046872">
    <property type="term" value="F:metal ion binding"/>
    <property type="evidence" value="ECO:0007669"/>
    <property type="project" value="UniProtKB-UniRule"/>
</dbReference>
<dbReference type="GO" id="GO:0000166">
    <property type="term" value="F:nucleotide binding"/>
    <property type="evidence" value="ECO:0007669"/>
    <property type="project" value="UniProtKB-KW"/>
</dbReference>
<dbReference type="Gene3D" id="3.40.1210.10">
    <property type="entry name" value="Survival protein SurE-like phosphatase/nucleotidase"/>
    <property type="match status" value="1"/>
</dbReference>
<dbReference type="HAMAP" id="MF_00060">
    <property type="entry name" value="SurE"/>
    <property type="match status" value="1"/>
</dbReference>
<dbReference type="InterPro" id="IPR030048">
    <property type="entry name" value="SurE"/>
</dbReference>
<dbReference type="InterPro" id="IPR002828">
    <property type="entry name" value="SurE-like_Pase/nucleotidase"/>
</dbReference>
<dbReference type="InterPro" id="IPR036523">
    <property type="entry name" value="SurE-like_sf"/>
</dbReference>
<dbReference type="NCBIfam" id="NF001491">
    <property type="entry name" value="PRK00346.2-1"/>
    <property type="match status" value="1"/>
</dbReference>
<dbReference type="NCBIfam" id="TIGR00087">
    <property type="entry name" value="surE"/>
    <property type="match status" value="1"/>
</dbReference>
<dbReference type="PANTHER" id="PTHR30457">
    <property type="entry name" value="5'-NUCLEOTIDASE SURE"/>
    <property type="match status" value="1"/>
</dbReference>
<dbReference type="PANTHER" id="PTHR30457:SF0">
    <property type="entry name" value="PHOSPHATASE, PUTATIVE (AFU_ORTHOLOGUE AFUA_4G01070)-RELATED"/>
    <property type="match status" value="1"/>
</dbReference>
<dbReference type="Pfam" id="PF01975">
    <property type="entry name" value="SurE"/>
    <property type="match status" value="1"/>
</dbReference>
<dbReference type="SUPFAM" id="SSF64167">
    <property type="entry name" value="SurE-like"/>
    <property type="match status" value="1"/>
</dbReference>
<name>SURE_METBU</name>
<reference key="1">
    <citation type="journal article" date="2009" name="ISME J.">
        <title>The genome sequence of the psychrophilic archaeon, Methanococcoides burtonii: the role of genome evolution in cold adaptation.</title>
        <authorList>
            <person name="Allen M.A."/>
            <person name="Lauro F.M."/>
            <person name="Williams T.J."/>
            <person name="Burg D."/>
            <person name="Siddiqui K.S."/>
            <person name="De Francisci D."/>
            <person name="Chong K.W."/>
            <person name="Pilak O."/>
            <person name="Chew H.H."/>
            <person name="De Maere M.Z."/>
            <person name="Ting L."/>
            <person name="Katrib M."/>
            <person name="Ng C."/>
            <person name="Sowers K.R."/>
            <person name="Galperin M.Y."/>
            <person name="Anderson I.J."/>
            <person name="Ivanova N."/>
            <person name="Dalin E."/>
            <person name="Martinez M."/>
            <person name="Lapidus A."/>
            <person name="Hauser L."/>
            <person name="Land M."/>
            <person name="Thomas T."/>
            <person name="Cavicchioli R."/>
        </authorList>
    </citation>
    <scope>NUCLEOTIDE SEQUENCE [LARGE SCALE GENOMIC DNA]</scope>
    <source>
        <strain>DSM 6242 / NBRC 107633 / OCM 468 / ACE-M</strain>
    </source>
</reference>
<accession>Q12U23</accession>
<keyword id="KW-0963">Cytoplasm</keyword>
<keyword id="KW-0378">Hydrolase</keyword>
<keyword id="KW-0479">Metal-binding</keyword>
<keyword id="KW-0547">Nucleotide-binding</keyword>
<sequence length="261" mass="28309">MSKRILLTNDDGVYAAGIRAAYRSVSDLGDVTVSAPAQQQSGVGRSISIFEPLRITRTTIDGIEVHAIGGTPTDSVILGIFTIMKELPDLILSGFNIGENISTDTITTSGTIGAALEGASYGVPAIAASLQVTEEGLKFDDLRDFQHDFDVGIKFVNGVAKKVLKNGLPENVDLLNINIPHFVEEDSEVEITRLARKFFRTGVEERRDPRGRPYYWIAGDLIHTAEKGTDVNAIEKGHISVTPISLDATSPINFSEIEHLM</sequence>
<protein>
    <recommendedName>
        <fullName evidence="1">5'-nucleotidase SurE</fullName>
        <ecNumber evidence="1">3.1.3.5</ecNumber>
    </recommendedName>
    <alternativeName>
        <fullName evidence="1">Nucleoside 5'-monophosphate phosphohydrolase</fullName>
    </alternativeName>
</protein>
<proteinExistence type="inferred from homology"/>
<feature type="chain" id="PRO_0000335292" description="5'-nucleotidase SurE">
    <location>
        <begin position="1"/>
        <end position="261"/>
    </location>
</feature>
<feature type="binding site" evidence="1">
    <location>
        <position position="10"/>
    </location>
    <ligand>
        <name>a divalent metal cation</name>
        <dbReference type="ChEBI" id="CHEBI:60240"/>
    </ligand>
</feature>
<feature type="binding site" evidence="1">
    <location>
        <position position="11"/>
    </location>
    <ligand>
        <name>a divalent metal cation</name>
        <dbReference type="ChEBI" id="CHEBI:60240"/>
    </ligand>
</feature>
<feature type="binding site" evidence="1">
    <location>
        <position position="41"/>
    </location>
    <ligand>
        <name>a divalent metal cation</name>
        <dbReference type="ChEBI" id="CHEBI:60240"/>
    </ligand>
</feature>
<feature type="binding site" evidence="1">
    <location>
        <position position="96"/>
    </location>
    <ligand>
        <name>a divalent metal cation</name>
        <dbReference type="ChEBI" id="CHEBI:60240"/>
    </ligand>
</feature>
<evidence type="ECO:0000255" key="1">
    <source>
        <dbReference type="HAMAP-Rule" id="MF_00060"/>
    </source>
</evidence>